<gene>
    <name evidence="1" type="primary">rplQ</name>
    <name type="ordered locus">CT2161</name>
</gene>
<comment type="subunit">
    <text evidence="1">Part of the 50S ribosomal subunit. Contacts protein L32.</text>
</comment>
<comment type="similarity">
    <text evidence="1">Belongs to the bacterial ribosomal protein bL17 family.</text>
</comment>
<protein>
    <recommendedName>
        <fullName evidence="1">Large ribosomal subunit protein bL17</fullName>
    </recommendedName>
    <alternativeName>
        <fullName evidence="3">50S ribosomal protein L17</fullName>
    </alternativeName>
</protein>
<reference key="1">
    <citation type="journal article" date="2002" name="Proc. Natl. Acad. Sci. U.S.A.">
        <title>The complete genome sequence of Chlorobium tepidum TLS, a photosynthetic, anaerobic, green-sulfur bacterium.</title>
        <authorList>
            <person name="Eisen J.A."/>
            <person name="Nelson K.E."/>
            <person name="Paulsen I.T."/>
            <person name="Heidelberg J.F."/>
            <person name="Wu M."/>
            <person name="Dodson R.J."/>
            <person name="DeBoy R.T."/>
            <person name="Gwinn M.L."/>
            <person name="Nelson W.C."/>
            <person name="Haft D.H."/>
            <person name="Hickey E.K."/>
            <person name="Peterson J.D."/>
            <person name="Durkin A.S."/>
            <person name="Kolonay J.F."/>
            <person name="Yang F."/>
            <person name="Holt I.E."/>
            <person name="Umayam L.A."/>
            <person name="Mason T.M."/>
            <person name="Brenner M."/>
            <person name="Shea T.P."/>
            <person name="Parksey D.S."/>
            <person name="Nierman W.C."/>
            <person name="Feldblyum T.V."/>
            <person name="Hansen C.L."/>
            <person name="Craven M.B."/>
            <person name="Radune D."/>
            <person name="Vamathevan J.J."/>
            <person name="Khouri H.M."/>
            <person name="White O."/>
            <person name="Gruber T.M."/>
            <person name="Ketchum K.A."/>
            <person name="Venter J.C."/>
            <person name="Tettelin H."/>
            <person name="Bryant D.A."/>
            <person name="Fraser C.M."/>
        </authorList>
    </citation>
    <scope>NUCLEOTIDE SEQUENCE [LARGE SCALE GENOMIC DNA]</scope>
    <source>
        <strain>ATCC 49652 / DSM 12025 / NBRC 103806 / TLS</strain>
    </source>
</reference>
<sequence>MRKVKPARKLGRTSAHRKATLSNLSTQLLIHKRIETTEAKAKETRKVVEKIITKARKGTHHAQREVFGALRDKEAVRELFEEIVGRIGSRNGGYTRIIKLAPRYGDAAKMAVIELVDYAEAPSAAPVVSKQDRAKRVKGSKKAESRSQENEGGDAAE</sequence>
<organism>
    <name type="scientific">Chlorobaculum tepidum (strain ATCC 49652 / DSM 12025 / NBRC 103806 / TLS)</name>
    <name type="common">Chlorobium tepidum</name>
    <dbReference type="NCBI Taxonomy" id="194439"/>
    <lineage>
        <taxon>Bacteria</taxon>
        <taxon>Pseudomonadati</taxon>
        <taxon>Chlorobiota</taxon>
        <taxon>Chlorobiia</taxon>
        <taxon>Chlorobiales</taxon>
        <taxon>Chlorobiaceae</taxon>
        <taxon>Chlorobaculum</taxon>
    </lineage>
</organism>
<proteinExistence type="inferred from homology"/>
<feature type="chain" id="PRO_1000055800" description="Large ribosomal subunit protein bL17">
    <location>
        <begin position="1"/>
        <end position="157"/>
    </location>
</feature>
<feature type="region of interest" description="Disordered" evidence="2">
    <location>
        <begin position="124"/>
        <end position="157"/>
    </location>
</feature>
<name>RL17_CHLTE</name>
<accession>Q8KAJ9</accession>
<evidence type="ECO:0000255" key="1">
    <source>
        <dbReference type="HAMAP-Rule" id="MF_01368"/>
    </source>
</evidence>
<evidence type="ECO:0000256" key="2">
    <source>
        <dbReference type="SAM" id="MobiDB-lite"/>
    </source>
</evidence>
<evidence type="ECO:0000305" key="3"/>
<dbReference type="EMBL" id="AE006470">
    <property type="protein sequence ID" value="AAM73377.1"/>
    <property type="molecule type" value="Genomic_DNA"/>
</dbReference>
<dbReference type="RefSeq" id="NP_663035.1">
    <property type="nucleotide sequence ID" value="NC_002932.3"/>
</dbReference>
<dbReference type="RefSeq" id="WP_010933814.1">
    <property type="nucleotide sequence ID" value="NC_002932.3"/>
</dbReference>
<dbReference type="SMR" id="Q8KAJ9"/>
<dbReference type="STRING" id="194439.CT2161"/>
<dbReference type="EnsemblBacteria" id="AAM73377">
    <property type="protein sequence ID" value="AAM73377"/>
    <property type="gene ID" value="CT2161"/>
</dbReference>
<dbReference type="KEGG" id="cte:CT2161"/>
<dbReference type="PATRIC" id="fig|194439.7.peg.1960"/>
<dbReference type="eggNOG" id="COG0203">
    <property type="taxonomic scope" value="Bacteria"/>
</dbReference>
<dbReference type="HOGENOM" id="CLU_074407_0_1_10"/>
<dbReference type="OrthoDB" id="9809073at2"/>
<dbReference type="Proteomes" id="UP000001007">
    <property type="component" value="Chromosome"/>
</dbReference>
<dbReference type="GO" id="GO:0022625">
    <property type="term" value="C:cytosolic large ribosomal subunit"/>
    <property type="evidence" value="ECO:0007669"/>
    <property type="project" value="TreeGrafter"/>
</dbReference>
<dbReference type="GO" id="GO:0003735">
    <property type="term" value="F:structural constituent of ribosome"/>
    <property type="evidence" value="ECO:0007669"/>
    <property type="project" value="InterPro"/>
</dbReference>
<dbReference type="GO" id="GO:0006412">
    <property type="term" value="P:translation"/>
    <property type="evidence" value="ECO:0007669"/>
    <property type="project" value="UniProtKB-UniRule"/>
</dbReference>
<dbReference type="Gene3D" id="3.90.1030.10">
    <property type="entry name" value="Ribosomal protein L17"/>
    <property type="match status" value="1"/>
</dbReference>
<dbReference type="HAMAP" id="MF_01368">
    <property type="entry name" value="Ribosomal_bL17"/>
    <property type="match status" value="1"/>
</dbReference>
<dbReference type="InterPro" id="IPR000456">
    <property type="entry name" value="Ribosomal_bL17"/>
</dbReference>
<dbReference type="InterPro" id="IPR047859">
    <property type="entry name" value="Ribosomal_bL17_CS"/>
</dbReference>
<dbReference type="InterPro" id="IPR036373">
    <property type="entry name" value="Ribosomal_bL17_sf"/>
</dbReference>
<dbReference type="NCBIfam" id="TIGR00059">
    <property type="entry name" value="L17"/>
    <property type="match status" value="1"/>
</dbReference>
<dbReference type="PANTHER" id="PTHR14413:SF16">
    <property type="entry name" value="LARGE RIBOSOMAL SUBUNIT PROTEIN BL17M"/>
    <property type="match status" value="1"/>
</dbReference>
<dbReference type="PANTHER" id="PTHR14413">
    <property type="entry name" value="RIBOSOMAL PROTEIN L17"/>
    <property type="match status" value="1"/>
</dbReference>
<dbReference type="Pfam" id="PF01196">
    <property type="entry name" value="Ribosomal_L17"/>
    <property type="match status" value="1"/>
</dbReference>
<dbReference type="SUPFAM" id="SSF64263">
    <property type="entry name" value="Prokaryotic ribosomal protein L17"/>
    <property type="match status" value="1"/>
</dbReference>
<dbReference type="PROSITE" id="PS01167">
    <property type="entry name" value="RIBOSOMAL_L17"/>
    <property type="match status" value="1"/>
</dbReference>
<keyword id="KW-1185">Reference proteome</keyword>
<keyword id="KW-0687">Ribonucleoprotein</keyword>
<keyword id="KW-0689">Ribosomal protein</keyword>